<feature type="chain" id="PRO_0000288524" description="ATP synthase subunit c, chloroplastic">
    <location>
        <begin position="1"/>
        <end position="81"/>
    </location>
</feature>
<feature type="transmembrane region" description="Helical" evidence="1">
    <location>
        <begin position="3"/>
        <end position="23"/>
    </location>
</feature>
<feature type="transmembrane region" description="Helical" evidence="1">
    <location>
        <begin position="57"/>
        <end position="77"/>
    </location>
</feature>
<feature type="site" description="Reversibly protonated during proton transport" evidence="1">
    <location>
        <position position="61"/>
    </location>
</feature>
<comment type="function">
    <text evidence="1">F(1)F(0) ATP synthase produces ATP from ADP in the presence of a proton or sodium gradient. F-type ATPases consist of two structural domains, F(1) containing the extramembraneous catalytic core and F(0) containing the membrane proton channel, linked together by a central stalk and a peripheral stalk. During catalysis, ATP synthesis in the catalytic domain of F(1) is coupled via a rotary mechanism of the central stalk subunits to proton translocation.</text>
</comment>
<comment type="function">
    <text evidence="1">Key component of the F(0) channel; it plays a direct role in translocation across the membrane. A homomeric c-ring of between 10-14 subunits forms the central stalk rotor element with the F(1) delta and epsilon subunits.</text>
</comment>
<comment type="subunit">
    <text evidence="1">F-type ATPases have 2 components, F(1) - the catalytic core - and F(0) - the membrane proton channel. F(1) has five subunits: alpha(3), beta(3), gamma(1), delta(1), epsilon(1). F(0) has four main subunits: a(1), b(1), b'(1) and c(10-14). The alpha and beta chains form an alternating ring which encloses part of the gamma chain. F(1) is attached to F(0) by a central stalk formed by the gamma and epsilon chains, while a peripheral stalk is formed by the delta, b and b' chains.</text>
</comment>
<comment type="subcellular location">
    <subcellularLocation>
        <location evidence="1">Plastid</location>
        <location evidence="1">Chloroplast thylakoid membrane</location>
        <topology evidence="1">Multi-pass membrane protein</topology>
    </subcellularLocation>
</comment>
<comment type="miscellaneous">
    <text>In plastids the F-type ATPase is also known as CF(1)CF(0).</text>
</comment>
<comment type="similarity">
    <text evidence="1">Belongs to the ATPase C chain family.</text>
</comment>
<evidence type="ECO:0000255" key="1">
    <source>
        <dbReference type="HAMAP-Rule" id="MF_01396"/>
    </source>
</evidence>
<protein>
    <recommendedName>
        <fullName evidence="1">ATP synthase subunit c, chloroplastic</fullName>
    </recommendedName>
    <alternativeName>
        <fullName evidence="1">ATP synthase F(0) sector subunit c</fullName>
    </alternativeName>
    <alternativeName>
        <fullName evidence="1">ATPase subunit III</fullName>
    </alternativeName>
    <alternativeName>
        <fullName evidence="1">F-type ATPase subunit c</fullName>
        <shortName evidence="1">F-ATPase subunit c</shortName>
    </alternativeName>
    <alternativeName>
        <fullName evidence="1">Lipid-binding protein</fullName>
    </alternativeName>
</protein>
<proteinExistence type="inferred from homology"/>
<keyword id="KW-0066">ATP synthesis</keyword>
<keyword id="KW-0138">CF(0)</keyword>
<keyword id="KW-0150">Chloroplast</keyword>
<keyword id="KW-0375">Hydrogen ion transport</keyword>
<keyword id="KW-0406">Ion transport</keyword>
<keyword id="KW-0446">Lipid-binding</keyword>
<keyword id="KW-0472">Membrane</keyword>
<keyword id="KW-0934">Plastid</keyword>
<keyword id="KW-1185">Reference proteome</keyword>
<keyword id="KW-0793">Thylakoid</keyword>
<keyword id="KW-0812">Transmembrane</keyword>
<keyword id="KW-1133">Transmembrane helix</keyword>
<keyword id="KW-0813">Transport</keyword>
<organism>
    <name type="scientific">Oryza sativa subsp. indica</name>
    <name type="common">Rice</name>
    <dbReference type="NCBI Taxonomy" id="39946"/>
    <lineage>
        <taxon>Eukaryota</taxon>
        <taxon>Viridiplantae</taxon>
        <taxon>Streptophyta</taxon>
        <taxon>Embryophyta</taxon>
        <taxon>Tracheophyta</taxon>
        <taxon>Spermatophyta</taxon>
        <taxon>Magnoliopsida</taxon>
        <taxon>Liliopsida</taxon>
        <taxon>Poales</taxon>
        <taxon>Poaceae</taxon>
        <taxon>BOP clade</taxon>
        <taxon>Oryzoideae</taxon>
        <taxon>Oryzeae</taxon>
        <taxon>Oryzinae</taxon>
        <taxon>Oryza</taxon>
        <taxon>Oryza sativa</taxon>
    </lineage>
</organism>
<reference key="1">
    <citation type="journal article" date="2004" name="Plant Physiol.">
        <title>A comparison of rice chloroplast genomes.</title>
        <authorList>
            <person name="Tang J."/>
            <person name="Xia H."/>
            <person name="Cao M."/>
            <person name="Zhang X."/>
            <person name="Zeng W."/>
            <person name="Hu S."/>
            <person name="Tong W."/>
            <person name="Wang J."/>
            <person name="Wang J."/>
            <person name="Yu J."/>
            <person name="Yang H."/>
            <person name="Zhu L."/>
        </authorList>
    </citation>
    <scope>NUCLEOTIDE SEQUENCE [LARGE SCALE GENOMIC DNA]</scope>
    <source>
        <strain>cv. 93-11</strain>
    </source>
</reference>
<dbReference type="EMBL" id="AY522329">
    <property type="protein sequence ID" value="AAS46051.1"/>
    <property type="molecule type" value="Genomic_DNA"/>
</dbReference>
<dbReference type="RefSeq" id="YP_009161359.1">
    <property type="nucleotide sequence ID" value="NC_027678.1"/>
</dbReference>
<dbReference type="RefSeq" id="YP_654211.1">
    <property type="nucleotide sequence ID" value="NC_008155.1"/>
</dbReference>
<dbReference type="SMR" id="P0C300"/>
<dbReference type="STRING" id="39946.P0C300"/>
<dbReference type="EnsemblPlants" id="BGIOSGA038912-TA">
    <property type="protein sequence ID" value="BGIOSGA038912-PA"/>
    <property type="gene ID" value="BGIOSGA038912"/>
</dbReference>
<dbReference type="EnsemblPlants" id="BGIOSGA040432-TA">
    <property type="protein sequence ID" value="BGIOSGA040432-PA"/>
    <property type="gene ID" value="BGIOSGA040432"/>
</dbReference>
<dbReference type="GeneID" id="4126881"/>
<dbReference type="Gramene" id="BGIOSGA038912-TA">
    <property type="protein sequence ID" value="BGIOSGA038912-PA"/>
    <property type="gene ID" value="BGIOSGA038912"/>
</dbReference>
<dbReference type="Gramene" id="BGIOSGA040432-TA">
    <property type="protein sequence ID" value="BGIOSGA040432-PA"/>
    <property type="gene ID" value="BGIOSGA040432"/>
</dbReference>
<dbReference type="HOGENOM" id="CLU_148047_2_0_1"/>
<dbReference type="OMA" id="QPELMNE"/>
<dbReference type="Proteomes" id="UP000007015">
    <property type="component" value="Chloroplast"/>
</dbReference>
<dbReference type="GO" id="GO:0009535">
    <property type="term" value="C:chloroplast thylakoid membrane"/>
    <property type="evidence" value="ECO:0007669"/>
    <property type="project" value="UniProtKB-SubCell"/>
</dbReference>
<dbReference type="GO" id="GO:0009536">
    <property type="term" value="C:plastid"/>
    <property type="evidence" value="ECO:0000305"/>
    <property type="project" value="Gramene"/>
</dbReference>
<dbReference type="GO" id="GO:0045259">
    <property type="term" value="C:proton-transporting ATP synthase complex"/>
    <property type="evidence" value="ECO:0007669"/>
    <property type="project" value="UniProtKB-KW"/>
</dbReference>
<dbReference type="GO" id="GO:0033177">
    <property type="term" value="C:proton-transporting two-sector ATPase complex, proton-transporting domain"/>
    <property type="evidence" value="ECO:0007669"/>
    <property type="project" value="InterPro"/>
</dbReference>
<dbReference type="GO" id="GO:0008289">
    <property type="term" value="F:lipid binding"/>
    <property type="evidence" value="ECO:0007669"/>
    <property type="project" value="UniProtKB-KW"/>
</dbReference>
<dbReference type="GO" id="GO:0046933">
    <property type="term" value="F:proton-transporting ATP synthase activity, rotational mechanism"/>
    <property type="evidence" value="ECO:0007669"/>
    <property type="project" value="UniProtKB-UniRule"/>
</dbReference>
<dbReference type="CDD" id="cd18183">
    <property type="entry name" value="ATP-synt_Fo_c_ATPH"/>
    <property type="match status" value="1"/>
</dbReference>
<dbReference type="FunFam" id="1.20.20.10:FF:000001">
    <property type="entry name" value="ATP synthase subunit c, chloroplastic"/>
    <property type="match status" value="1"/>
</dbReference>
<dbReference type="Gene3D" id="1.20.20.10">
    <property type="entry name" value="F1F0 ATP synthase subunit C"/>
    <property type="match status" value="1"/>
</dbReference>
<dbReference type="HAMAP" id="MF_01396">
    <property type="entry name" value="ATP_synth_c_bact"/>
    <property type="match status" value="1"/>
</dbReference>
<dbReference type="InterPro" id="IPR005953">
    <property type="entry name" value="ATP_synth_csu_bac/chlpt"/>
</dbReference>
<dbReference type="InterPro" id="IPR000454">
    <property type="entry name" value="ATP_synth_F0_csu"/>
</dbReference>
<dbReference type="InterPro" id="IPR020537">
    <property type="entry name" value="ATP_synth_F0_csu_DDCD_BS"/>
</dbReference>
<dbReference type="InterPro" id="IPR038662">
    <property type="entry name" value="ATP_synth_F0_csu_sf"/>
</dbReference>
<dbReference type="InterPro" id="IPR002379">
    <property type="entry name" value="ATPase_proteolipid_c-like_dom"/>
</dbReference>
<dbReference type="InterPro" id="IPR035921">
    <property type="entry name" value="F/V-ATP_Csub_sf"/>
</dbReference>
<dbReference type="NCBIfam" id="TIGR01260">
    <property type="entry name" value="ATP_synt_c"/>
    <property type="match status" value="1"/>
</dbReference>
<dbReference type="NCBIfam" id="NF005608">
    <property type="entry name" value="PRK07354.1"/>
    <property type="match status" value="1"/>
</dbReference>
<dbReference type="PANTHER" id="PTHR10031">
    <property type="entry name" value="ATP SYNTHASE LIPID-BINDING PROTEIN, MITOCHONDRIAL"/>
    <property type="match status" value="1"/>
</dbReference>
<dbReference type="PANTHER" id="PTHR10031:SF0">
    <property type="entry name" value="ATPASE PROTEIN 9"/>
    <property type="match status" value="1"/>
</dbReference>
<dbReference type="Pfam" id="PF00137">
    <property type="entry name" value="ATP-synt_C"/>
    <property type="match status" value="1"/>
</dbReference>
<dbReference type="PRINTS" id="PR00124">
    <property type="entry name" value="ATPASEC"/>
</dbReference>
<dbReference type="SUPFAM" id="SSF81333">
    <property type="entry name" value="F1F0 ATP synthase subunit C"/>
    <property type="match status" value="1"/>
</dbReference>
<dbReference type="PROSITE" id="PS00605">
    <property type="entry name" value="ATPASE_C"/>
    <property type="match status" value="1"/>
</dbReference>
<sequence>MNPLIAAASVIAAGLAVGLASIGPGVGQGTAAGQAVEGIARQPEAEGKIRGTLLLSLAFMEALTIYGLVVALALLFANPFV</sequence>
<accession>P0C300</accession>
<accession>P00843</accession>
<accession>P69450</accession>
<accession>Q33180</accession>
<accession>Q6QY78</accession>
<accession>Q7G7F1</accession>
<accession>Q9XPT1</accession>
<gene>
    <name evidence="1" type="primary">atpH</name>
    <name type="ORF">9311040</name>
</gene>
<geneLocation type="chloroplast"/>
<name>ATPH_ORYSI</name>